<name>PYRE_BACCN</name>
<dbReference type="EC" id="2.4.2.10" evidence="1"/>
<dbReference type="EMBL" id="CP000764">
    <property type="protein sequence ID" value="ABS22765.1"/>
    <property type="molecule type" value="Genomic_DNA"/>
</dbReference>
<dbReference type="RefSeq" id="WP_012094972.1">
    <property type="nucleotide sequence ID" value="NC_009674.1"/>
</dbReference>
<dbReference type="SMR" id="A7GRK7"/>
<dbReference type="STRING" id="315749.Bcer98_2531"/>
<dbReference type="GeneID" id="33897785"/>
<dbReference type="KEGG" id="bcy:Bcer98_2531"/>
<dbReference type="eggNOG" id="COG0461">
    <property type="taxonomic scope" value="Bacteria"/>
</dbReference>
<dbReference type="HOGENOM" id="CLU_074878_1_1_9"/>
<dbReference type="OrthoDB" id="9802134at2"/>
<dbReference type="UniPathway" id="UPA00070">
    <property type="reaction ID" value="UER00119"/>
</dbReference>
<dbReference type="Proteomes" id="UP000002300">
    <property type="component" value="Chromosome"/>
</dbReference>
<dbReference type="GO" id="GO:0000287">
    <property type="term" value="F:magnesium ion binding"/>
    <property type="evidence" value="ECO:0007669"/>
    <property type="project" value="UniProtKB-UniRule"/>
</dbReference>
<dbReference type="GO" id="GO:0004588">
    <property type="term" value="F:orotate phosphoribosyltransferase activity"/>
    <property type="evidence" value="ECO:0007669"/>
    <property type="project" value="UniProtKB-UniRule"/>
</dbReference>
<dbReference type="GO" id="GO:0044205">
    <property type="term" value="P:'de novo' UMP biosynthetic process"/>
    <property type="evidence" value="ECO:0007669"/>
    <property type="project" value="UniProtKB-UniRule"/>
</dbReference>
<dbReference type="GO" id="GO:0019856">
    <property type="term" value="P:pyrimidine nucleobase biosynthetic process"/>
    <property type="evidence" value="ECO:0007669"/>
    <property type="project" value="TreeGrafter"/>
</dbReference>
<dbReference type="CDD" id="cd06223">
    <property type="entry name" value="PRTases_typeI"/>
    <property type="match status" value="1"/>
</dbReference>
<dbReference type="Gene3D" id="3.40.50.2020">
    <property type="match status" value="1"/>
</dbReference>
<dbReference type="HAMAP" id="MF_01208">
    <property type="entry name" value="PyrE"/>
    <property type="match status" value="1"/>
</dbReference>
<dbReference type="InterPro" id="IPR023031">
    <property type="entry name" value="OPRT"/>
</dbReference>
<dbReference type="InterPro" id="IPR004467">
    <property type="entry name" value="Or_phspho_trans_dom"/>
</dbReference>
<dbReference type="InterPro" id="IPR000836">
    <property type="entry name" value="PRibTrfase_dom"/>
</dbReference>
<dbReference type="InterPro" id="IPR029057">
    <property type="entry name" value="PRTase-like"/>
</dbReference>
<dbReference type="NCBIfam" id="TIGR00336">
    <property type="entry name" value="pyrE"/>
    <property type="match status" value="1"/>
</dbReference>
<dbReference type="PANTHER" id="PTHR19278">
    <property type="entry name" value="OROTATE PHOSPHORIBOSYLTRANSFERASE"/>
    <property type="match status" value="1"/>
</dbReference>
<dbReference type="PANTHER" id="PTHR19278:SF9">
    <property type="entry name" value="URIDINE 5'-MONOPHOSPHATE SYNTHASE"/>
    <property type="match status" value="1"/>
</dbReference>
<dbReference type="Pfam" id="PF00156">
    <property type="entry name" value="Pribosyltran"/>
    <property type="match status" value="1"/>
</dbReference>
<dbReference type="SUPFAM" id="SSF53271">
    <property type="entry name" value="PRTase-like"/>
    <property type="match status" value="1"/>
</dbReference>
<dbReference type="PROSITE" id="PS00103">
    <property type="entry name" value="PUR_PYR_PR_TRANSFER"/>
    <property type="match status" value="1"/>
</dbReference>
<gene>
    <name evidence="1" type="primary">pyrE</name>
    <name type="ordered locus">Bcer98_2531</name>
</gene>
<evidence type="ECO:0000255" key="1">
    <source>
        <dbReference type="HAMAP-Rule" id="MF_01208"/>
    </source>
</evidence>
<organism>
    <name type="scientific">Bacillus cytotoxicus (strain DSM 22905 / CIP 110041 / 391-98 / NVH 391-98)</name>
    <dbReference type="NCBI Taxonomy" id="315749"/>
    <lineage>
        <taxon>Bacteria</taxon>
        <taxon>Bacillati</taxon>
        <taxon>Bacillota</taxon>
        <taxon>Bacilli</taxon>
        <taxon>Bacillales</taxon>
        <taxon>Bacillaceae</taxon>
        <taxon>Bacillus</taxon>
        <taxon>Bacillus cereus group</taxon>
    </lineage>
</organism>
<keyword id="KW-0328">Glycosyltransferase</keyword>
<keyword id="KW-0460">Magnesium</keyword>
<keyword id="KW-0665">Pyrimidine biosynthesis</keyword>
<keyword id="KW-0808">Transferase</keyword>
<accession>A7GRK7</accession>
<feature type="chain" id="PRO_1000085537" description="Orotate phosphoribosyltransferase">
    <location>
        <begin position="1"/>
        <end position="210"/>
    </location>
</feature>
<feature type="binding site" evidence="1">
    <location>
        <position position="94"/>
    </location>
    <ligand>
        <name>5-phospho-alpha-D-ribose 1-diphosphate</name>
        <dbReference type="ChEBI" id="CHEBI:58017"/>
        <note>ligand shared between dimeric partners</note>
    </ligand>
</feature>
<feature type="binding site" evidence="1">
    <location>
        <position position="98"/>
    </location>
    <ligand>
        <name>5-phospho-alpha-D-ribose 1-diphosphate</name>
        <dbReference type="ChEBI" id="CHEBI:58017"/>
        <note>ligand shared between dimeric partners</note>
    </ligand>
</feature>
<feature type="binding site" evidence="1">
    <location>
        <position position="100"/>
    </location>
    <ligand>
        <name>5-phospho-alpha-D-ribose 1-diphosphate</name>
        <dbReference type="ChEBI" id="CHEBI:58017"/>
        <note>ligand shared between dimeric partners</note>
    </ligand>
</feature>
<feature type="binding site" description="in other chain" evidence="1">
    <location>
        <begin position="120"/>
        <end position="128"/>
    </location>
    <ligand>
        <name>5-phospho-alpha-D-ribose 1-diphosphate</name>
        <dbReference type="ChEBI" id="CHEBI:58017"/>
        <note>ligand shared between dimeric partners</note>
    </ligand>
</feature>
<feature type="binding site" evidence="1">
    <location>
        <position position="124"/>
    </location>
    <ligand>
        <name>orotate</name>
        <dbReference type="ChEBI" id="CHEBI:30839"/>
    </ligand>
</feature>
<reference key="1">
    <citation type="journal article" date="2008" name="Chem. Biol. Interact.">
        <title>Extending the Bacillus cereus group genomics to putative food-borne pathogens of different toxicity.</title>
        <authorList>
            <person name="Lapidus A."/>
            <person name="Goltsman E."/>
            <person name="Auger S."/>
            <person name="Galleron N."/>
            <person name="Segurens B."/>
            <person name="Dossat C."/>
            <person name="Land M.L."/>
            <person name="Broussolle V."/>
            <person name="Brillard J."/>
            <person name="Guinebretiere M.-H."/>
            <person name="Sanchis V."/>
            <person name="Nguen-the C."/>
            <person name="Lereclus D."/>
            <person name="Richardson P."/>
            <person name="Wincker P."/>
            <person name="Weissenbach J."/>
            <person name="Ehrlich S.D."/>
            <person name="Sorokin A."/>
        </authorList>
    </citation>
    <scope>NUCLEOTIDE SEQUENCE [LARGE SCALE GENOMIC DNA]</scope>
    <source>
        <strain>DSM 22905 / CIP 110041 / 391-98 / NVH 391-98</strain>
    </source>
</reference>
<proteinExistence type="inferred from homology"/>
<protein>
    <recommendedName>
        <fullName evidence="1">Orotate phosphoribosyltransferase</fullName>
        <shortName evidence="1">OPRT</shortName>
        <shortName evidence="1">OPRTase</shortName>
        <ecNumber evidence="1">2.4.2.10</ecNumber>
    </recommendedName>
</protein>
<sequence length="210" mass="22760">MKKEIASHLLEIGAVFLQPNDPFTWSSGMKSPIYCDNRLTLSYPKVRQAIAAGLEELIKEHFPTVEVIAGTATAGIAHAAWVSDRMNLPMCYVRSKAKGHGKGNQIEGKAEKGQKVVVVEDLISTGGSAITCVEALREAGCEVLGIVSIFTYELEAGKEKLAAANVASYSLSDYSTLTQVAEEKGMIGQAEMKKLQEWRKNPADEAWITA</sequence>
<comment type="function">
    <text evidence="1">Catalyzes the transfer of a ribosyl phosphate group from 5-phosphoribose 1-diphosphate to orotate, leading to the formation of orotidine monophosphate (OMP).</text>
</comment>
<comment type="catalytic activity">
    <reaction evidence="1">
        <text>orotidine 5'-phosphate + diphosphate = orotate + 5-phospho-alpha-D-ribose 1-diphosphate</text>
        <dbReference type="Rhea" id="RHEA:10380"/>
        <dbReference type="ChEBI" id="CHEBI:30839"/>
        <dbReference type="ChEBI" id="CHEBI:33019"/>
        <dbReference type="ChEBI" id="CHEBI:57538"/>
        <dbReference type="ChEBI" id="CHEBI:58017"/>
        <dbReference type="EC" id="2.4.2.10"/>
    </reaction>
</comment>
<comment type="cofactor">
    <cofactor evidence="1">
        <name>Mg(2+)</name>
        <dbReference type="ChEBI" id="CHEBI:18420"/>
    </cofactor>
</comment>
<comment type="pathway">
    <text evidence="1">Pyrimidine metabolism; UMP biosynthesis via de novo pathway; UMP from orotate: step 1/2.</text>
</comment>
<comment type="subunit">
    <text evidence="1">Homodimer.</text>
</comment>
<comment type="similarity">
    <text evidence="1">Belongs to the purine/pyrimidine phosphoribosyltransferase family. PyrE subfamily.</text>
</comment>